<keyword id="KW-0025">Alternative splicing</keyword>
<keyword id="KW-0067">ATP-binding</keyword>
<keyword id="KW-0131">Cell cycle</keyword>
<keyword id="KW-0963">Cytoplasm</keyword>
<keyword id="KW-0547">Nucleotide-binding</keyword>
<keyword id="KW-0539">Nucleus</keyword>
<keyword id="KW-1185">Reference proteome</keyword>
<name>STRAB_MOUSE</name>
<proteinExistence type="evidence at transcript level"/>
<evidence type="ECO:0000250" key="1"/>
<evidence type="ECO:0000255" key="2">
    <source>
        <dbReference type="PROSITE-ProRule" id="PRU00159"/>
    </source>
</evidence>
<evidence type="ECO:0000303" key="3">
    <source>
    </source>
</evidence>
<evidence type="ECO:0000305" key="4"/>
<organism>
    <name type="scientific">Mus musculus</name>
    <name type="common">Mouse</name>
    <dbReference type="NCBI Taxonomy" id="10090"/>
    <lineage>
        <taxon>Eukaryota</taxon>
        <taxon>Metazoa</taxon>
        <taxon>Chordata</taxon>
        <taxon>Craniata</taxon>
        <taxon>Vertebrata</taxon>
        <taxon>Euteleostomi</taxon>
        <taxon>Mammalia</taxon>
        <taxon>Eutheria</taxon>
        <taxon>Euarchontoglires</taxon>
        <taxon>Glires</taxon>
        <taxon>Rodentia</taxon>
        <taxon>Myomorpha</taxon>
        <taxon>Muroidea</taxon>
        <taxon>Muridae</taxon>
        <taxon>Murinae</taxon>
        <taxon>Mus</taxon>
        <taxon>Mus</taxon>
    </lineage>
</organism>
<comment type="function">
    <text evidence="1">Pseudokinase which, in complex with CAB39/MO25 (CAB39/MO25alpha or CAB39L/MO25beta), binds to and activates STK11/LKB1. Adopts a closed conformation typical of active protein kinases and binds STK11/LKB1 as a pseudosubstrate, promoting conformational change of STK11/LKB1 in an active conformation (By similarity).</text>
</comment>
<comment type="subunit">
    <text evidence="1">Component of a trimeric complex composed of STK11/LKB1, STRAD (STRADA or STRADB) and CAB39/MO25 (CAB39/MO25alpha or CAB39L/MO25beta): the complex tethers STK11/LKB1 in the cytoplasm and stimulates its catalytic activity. Interacts with BIRC4/XIAP. These two proteins are likely to coexist in a complex with TAK1, TRAF6, TAB1 and TAB2 (By similarity).</text>
</comment>
<comment type="subcellular location">
    <subcellularLocation>
        <location>Nucleus</location>
    </subcellularLocation>
    <subcellularLocation>
        <location>Cytoplasm</location>
    </subcellularLocation>
</comment>
<comment type="alternative products">
    <event type="alternative splicing"/>
    <isoform>
        <id>Q8K4T3-1</id>
        <name>1</name>
        <name>PAPK-A</name>
        <sequence type="displayed"/>
    </isoform>
    <isoform>
        <id>Q8K4T3-2</id>
        <name>2</name>
        <name>PAPK-B</name>
        <sequence type="described" ref="VSP_016626 VSP_016627"/>
    </isoform>
</comment>
<comment type="domain">
    <text>The protein kinase domain is predicted to be catalytically inactive.</text>
</comment>
<comment type="similarity">
    <text evidence="4">Belongs to the protein kinase superfamily. STE Ser/Thr protein kinase family. STE20 subfamily.</text>
</comment>
<comment type="caution">
    <text evidence="4">Ser-184 is present instead of the conserved Asp which is expected to be an active site residue.</text>
</comment>
<accession>Q8K4T3</accession>
<accession>Q6P922</accession>
<accession>Q8BU86</accession>
<accession>Q8BXK0</accession>
<accession>Q8K4T2</accession>
<protein>
    <recommendedName>
        <fullName>STE20-related kinase adapter protein beta</fullName>
        <shortName>STRAD beta</shortName>
    </recommendedName>
    <alternativeName>
        <fullName>Amyotrophic lateral sclerosis 2 chromosomal region candidate gene 2 protein homolog</fullName>
    </alternativeName>
    <alternativeName>
        <fullName>ILP-interacting protein homolog</fullName>
    </alternativeName>
    <alternativeName>
        <fullName>Polyploidy-associated protein kinase</fullName>
    </alternativeName>
    <alternativeName>
        <fullName>Pseudokinase ALS2CR2</fullName>
    </alternativeName>
</protein>
<gene>
    <name type="primary">Stradb</name>
    <name type="synonym">Als2cr2</name>
    <name type="synonym">Papk</name>
    <name type="synonym">Syradb</name>
</gene>
<sequence>MSLLDCFCASRTRVESLRPEKQSETSIHQYLVDESAISRPPPSARASEVICSTDVSHYELQVEIGRGFDNLTSVHLARHTPTGTLVTVKITNLESCTEERLKALQRAVILSHFFQHPNITTYWTVFTVGSWLWVISPFMAYGSASQLLRTYFPDGMSETLIRNILFGAVQGLNYLHQNGCIHRSFKASHILISGDGLVTLSGLSHLHSLLKHGQRHRAVFDFPQFSTSVQPWLSPELLRQDLHGYNVKSDIYSVGITACELASGQVPFQDMHRTQMLLQKLKGPPYSPLDVSIFPQSDSRMRNSQSGVDSGIGESVLVSTGTHTVNSDRLHTPSTKTFSPAFFSLVQLCLQQDPEKRPSASSLLSHVFFKQMKEESQDSILPLLPPAYNRPSASLQPVSPWSELEFQFPDDKDPVWEF</sequence>
<feature type="chain" id="PRO_0000085618" description="STE20-related kinase adapter protein beta">
    <location>
        <begin position="1"/>
        <end position="418"/>
    </location>
</feature>
<feature type="domain" description="Protein kinase" evidence="2">
    <location>
        <begin position="58"/>
        <end position="369"/>
    </location>
</feature>
<feature type="binding site" evidence="2">
    <location>
        <begin position="64"/>
        <end position="72"/>
    </location>
    <ligand>
        <name>ATP</name>
        <dbReference type="ChEBI" id="CHEBI:30616"/>
    </ligand>
</feature>
<feature type="binding site" evidence="2">
    <location>
        <position position="89"/>
    </location>
    <ligand>
        <name>ATP</name>
        <dbReference type="ChEBI" id="CHEBI:30616"/>
    </ligand>
</feature>
<feature type="splice variant" id="VSP_016626" description="In isoform 2." evidence="3">
    <original>SFKASHILISGDGLVTLSGLSHLHSL</original>
    <variation>YLLIYSLHKRKNFKEVIQRNFCKDKC</variation>
    <location>
        <begin position="184"/>
        <end position="209"/>
    </location>
</feature>
<feature type="splice variant" id="VSP_016627" description="In isoform 2." evidence="3">
    <location>
        <begin position="210"/>
        <end position="418"/>
    </location>
</feature>
<feature type="sequence conflict" description="In Ref. 1; BAB68236 and 2; BAE24309." evidence="4" ref="1 2">
    <original>SFKASH</original>
    <variation>IYMDIM</variation>
    <location>
        <begin position="184"/>
        <end position="189"/>
    </location>
</feature>
<feature type="sequence conflict" description="In Ref. 3; AAH60956." evidence="4" ref="3">
    <original>F</original>
    <variation>L</variation>
    <location>
        <position position="343"/>
    </location>
</feature>
<feature type="sequence conflict" description="In Ref. 2; BAC32870." evidence="4" ref="2">
    <original>L</original>
    <variation>S</variation>
    <location>
        <position position="345"/>
    </location>
</feature>
<dbReference type="EMBL" id="AB057666">
    <property type="protein sequence ID" value="BAB68235.1"/>
    <property type="molecule type" value="mRNA"/>
</dbReference>
<dbReference type="EMBL" id="AB057667">
    <property type="protein sequence ID" value="BAB68236.1"/>
    <property type="molecule type" value="mRNA"/>
</dbReference>
<dbReference type="EMBL" id="AK046790">
    <property type="protein sequence ID" value="BAC32870.1"/>
    <property type="molecule type" value="mRNA"/>
</dbReference>
<dbReference type="EMBL" id="AK080096">
    <property type="protein sequence ID" value="BAC37825.1"/>
    <property type="molecule type" value="mRNA"/>
</dbReference>
<dbReference type="EMBL" id="AK086974">
    <property type="protein sequence ID" value="BAC39775.1"/>
    <property type="molecule type" value="mRNA"/>
</dbReference>
<dbReference type="EMBL" id="AK146079">
    <property type="protein sequence ID" value="BAE26883.1"/>
    <property type="molecule type" value="mRNA"/>
</dbReference>
<dbReference type="EMBL" id="AK140272">
    <property type="protein sequence ID" value="BAE24309.1"/>
    <property type="molecule type" value="mRNA"/>
</dbReference>
<dbReference type="EMBL" id="BC060956">
    <property type="protein sequence ID" value="AAH60956.1"/>
    <property type="molecule type" value="mRNA"/>
</dbReference>
<dbReference type="CCDS" id="CCDS14981.1">
    <molecule id="Q8K4T3-1"/>
</dbReference>
<dbReference type="RefSeq" id="NP_766244.4">
    <molecule id="Q8K4T3-1"/>
    <property type="nucleotide sequence ID" value="NM_172656.5"/>
</dbReference>
<dbReference type="SMR" id="Q8K4T3"/>
<dbReference type="FunCoup" id="Q8K4T3">
    <property type="interactions" value="1888"/>
</dbReference>
<dbReference type="STRING" id="10090.ENSMUSP00000027185"/>
<dbReference type="iPTMnet" id="Q8K4T3"/>
<dbReference type="PhosphoSitePlus" id="Q8K4T3"/>
<dbReference type="SwissPalm" id="Q8K4T3"/>
<dbReference type="PaxDb" id="10090-ENSMUSP00000027185"/>
<dbReference type="ProteomicsDB" id="257499">
    <molecule id="Q8K4T3-1"/>
</dbReference>
<dbReference type="ProteomicsDB" id="257500">
    <molecule id="Q8K4T3-2"/>
</dbReference>
<dbReference type="Antibodypedia" id="19937">
    <property type="antibodies" value="385 antibodies from 38 providers"/>
</dbReference>
<dbReference type="DNASU" id="227154"/>
<dbReference type="Ensembl" id="ENSMUST00000027185.11">
    <molecule id="Q8K4T3-1"/>
    <property type="protein sequence ID" value="ENSMUSP00000027185.5"/>
    <property type="gene ID" value="ENSMUSG00000026027.14"/>
</dbReference>
<dbReference type="Ensembl" id="ENSMUST00000114296.8">
    <molecule id="Q8K4T3-2"/>
    <property type="protein sequence ID" value="ENSMUSP00000109935.2"/>
    <property type="gene ID" value="ENSMUSG00000026027.14"/>
</dbReference>
<dbReference type="GeneID" id="227154"/>
<dbReference type="KEGG" id="mmu:227154"/>
<dbReference type="UCSC" id="uc007bcx.1">
    <molecule id="Q8K4T3-2"/>
    <property type="organism name" value="mouse"/>
</dbReference>
<dbReference type="UCSC" id="uc007bcy.1">
    <molecule id="Q8K4T3-1"/>
    <property type="organism name" value="mouse"/>
</dbReference>
<dbReference type="AGR" id="MGI:2144047"/>
<dbReference type="CTD" id="55437"/>
<dbReference type="MGI" id="MGI:2144047">
    <property type="gene designation" value="Stradb"/>
</dbReference>
<dbReference type="VEuPathDB" id="HostDB:ENSMUSG00000026027"/>
<dbReference type="eggNOG" id="KOG0582">
    <property type="taxonomic scope" value="Eukaryota"/>
</dbReference>
<dbReference type="GeneTree" id="ENSGT00940000155390"/>
<dbReference type="HOGENOM" id="CLU_1434041_0_0_1"/>
<dbReference type="InParanoid" id="Q8K4T3"/>
<dbReference type="OMA" id="KNEMVFC"/>
<dbReference type="OrthoDB" id="840771at2759"/>
<dbReference type="PhylomeDB" id="Q8K4T3"/>
<dbReference type="TreeFam" id="TF319817"/>
<dbReference type="Reactome" id="R-MMU-380972">
    <property type="pathway name" value="Energy dependent regulation of mTOR by LKB1-AMPK"/>
</dbReference>
<dbReference type="BioGRID-ORCS" id="227154">
    <property type="hits" value="4 hits in 79 CRISPR screens"/>
</dbReference>
<dbReference type="ChiTaRS" id="Stradb">
    <property type="organism name" value="mouse"/>
</dbReference>
<dbReference type="PRO" id="PR:Q8K4T3"/>
<dbReference type="Proteomes" id="UP000000589">
    <property type="component" value="Chromosome 1"/>
</dbReference>
<dbReference type="RNAct" id="Q8K4T3">
    <property type="molecule type" value="protein"/>
</dbReference>
<dbReference type="Bgee" id="ENSMUSG00000026027">
    <property type="expression patterns" value="Expressed in vastus lateralis and 236 other cell types or tissues"/>
</dbReference>
<dbReference type="ExpressionAtlas" id="Q8K4T3">
    <property type="expression patterns" value="baseline and differential"/>
</dbReference>
<dbReference type="GO" id="GO:0016235">
    <property type="term" value="C:aggresome"/>
    <property type="evidence" value="ECO:0007669"/>
    <property type="project" value="Ensembl"/>
</dbReference>
<dbReference type="GO" id="GO:0005737">
    <property type="term" value="C:cytoplasm"/>
    <property type="evidence" value="ECO:0000250"/>
    <property type="project" value="UniProtKB"/>
</dbReference>
<dbReference type="GO" id="GO:0005829">
    <property type="term" value="C:cytosol"/>
    <property type="evidence" value="ECO:0007669"/>
    <property type="project" value="Ensembl"/>
</dbReference>
<dbReference type="GO" id="GO:0005634">
    <property type="term" value="C:nucleus"/>
    <property type="evidence" value="ECO:0000250"/>
    <property type="project" value="UniProtKB"/>
</dbReference>
<dbReference type="GO" id="GO:0005524">
    <property type="term" value="F:ATP binding"/>
    <property type="evidence" value="ECO:0007669"/>
    <property type="project" value="UniProtKB-KW"/>
</dbReference>
<dbReference type="GO" id="GO:0004672">
    <property type="term" value="F:protein kinase activity"/>
    <property type="evidence" value="ECO:0000314"/>
    <property type="project" value="MGI"/>
</dbReference>
<dbReference type="GO" id="GO:0043539">
    <property type="term" value="F:protein serine/threonine kinase activator activity"/>
    <property type="evidence" value="ECO:0007669"/>
    <property type="project" value="InterPro"/>
</dbReference>
<dbReference type="GO" id="GO:0032147">
    <property type="term" value="P:activation of protein kinase activity"/>
    <property type="evidence" value="ECO:0000250"/>
    <property type="project" value="UniProtKB"/>
</dbReference>
<dbReference type="GO" id="GO:0000902">
    <property type="term" value="P:cell morphogenesis"/>
    <property type="evidence" value="ECO:0000314"/>
    <property type="project" value="MGI"/>
</dbReference>
<dbReference type="GO" id="GO:0007010">
    <property type="term" value="P:cytoskeleton organization"/>
    <property type="evidence" value="ECO:0000304"/>
    <property type="project" value="MGI"/>
</dbReference>
<dbReference type="GO" id="GO:0007254">
    <property type="term" value="P:JNK cascade"/>
    <property type="evidence" value="ECO:0000314"/>
    <property type="project" value="MGI"/>
</dbReference>
<dbReference type="GO" id="GO:2001240">
    <property type="term" value="P:negative regulation of extrinsic apoptotic signaling pathway in absence of ligand"/>
    <property type="evidence" value="ECO:0000314"/>
    <property type="project" value="MGI"/>
</dbReference>
<dbReference type="GO" id="GO:0006611">
    <property type="term" value="P:protein export from nucleus"/>
    <property type="evidence" value="ECO:0000250"/>
    <property type="project" value="UniProtKB"/>
</dbReference>
<dbReference type="CDD" id="cd08226">
    <property type="entry name" value="PK_STRAD_beta"/>
    <property type="match status" value="1"/>
</dbReference>
<dbReference type="FunFam" id="1.10.510.10:FF:000419">
    <property type="entry name" value="STE20-related kinase adapter protein beta"/>
    <property type="match status" value="1"/>
</dbReference>
<dbReference type="FunFam" id="3.30.200.20:FF:000291">
    <property type="entry name" value="STE20-related kinase adapter protein beta isoform X1"/>
    <property type="match status" value="1"/>
</dbReference>
<dbReference type="Gene3D" id="3.30.200.20">
    <property type="entry name" value="Phosphorylase Kinase, domain 1"/>
    <property type="match status" value="1"/>
</dbReference>
<dbReference type="Gene3D" id="1.10.510.10">
    <property type="entry name" value="Transferase(Phosphotransferase) domain 1"/>
    <property type="match status" value="1"/>
</dbReference>
<dbReference type="InterPro" id="IPR011009">
    <property type="entry name" value="Kinase-like_dom_sf"/>
</dbReference>
<dbReference type="InterPro" id="IPR000719">
    <property type="entry name" value="Prot_kinase_dom"/>
</dbReference>
<dbReference type="InterPro" id="IPR047173">
    <property type="entry name" value="STRAD_A/B-like"/>
</dbReference>
<dbReference type="PANTHER" id="PTHR48014">
    <property type="entry name" value="SERINE/THREONINE-PROTEIN KINASE FRAY2"/>
    <property type="match status" value="1"/>
</dbReference>
<dbReference type="PANTHER" id="PTHR48014:SF13">
    <property type="entry name" value="STE20-RELATED KINASE ADAPTER PROTEIN BETA"/>
    <property type="match status" value="1"/>
</dbReference>
<dbReference type="Pfam" id="PF00069">
    <property type="entry name" value="Pkinase"/>
    <property type="match status" value="1"/>
</dbReference>
<dbReference type="SUPFAM" id="SSF56112">
    <property type="entry name" value="Protein kinase-like (PK-like)"/>
    <property type="match status" value="1"/>
</dbReference>
<dbReference type="PROSITE" id="PS50011">
    <property type="entry name" value="PROTEIN_KINASE_DOM"/>
    <property type="match status" value="1"/>
</dbReference>
<reference key="1">
    <citation type="journal article" date="2003" name="J. Biol. Chem.">
        <title>Identification and characterization of a novel Ste20/germinal center kinase-related kinase, polyploidy-associated protein kinase.</title>
        <authorList>
            <person name="Nishigaki K."/>
            <person name="Thompson D."/>
            <person name="Yugawa T."/>
            <person name="Rulli K."/>
            <person name="Hanson C."/>
            <person name="Cmarik J."/>
            <person name="Gutkind J.S."/>
            <person name="Teramoto H."/>
            <person name="Ruscetti S."/>
        </authorList>
    </citation>
    <scope>NUCLEOTIDE SEQUENCE [MRNA] (ISOFORM 1)</scope>
</reference>
<reference key="2">
    <citation type="journal article" date="2005" name="Science">
        <title>The transcriptional landscape of the mammalian genome.</title>
        <authorList>
            <person name="Carninci P."/>
            <person name="Kasukawa T."/>
            <person name="Katayama S."/>
            <person name="Gough J."/>
            <person name="Frith M.C."/>
            <person name="Maeda N."/>
            <person name="Oyama R."/>
            <person name="Ravasi T."/>
            <person name="Lenhard B."/>
            <person name="Wells C."/>
            <person name="Kodzius R."/>
            <person name="Shimokawa K."/>
            <person name="Bajic V.B."/>
            <person name="Brenner S.E."/>
            <person name="Batalov S."/>
            <person name="Forrest A.R."/>
            <person name="Zavolan M."/>
            <person name="Davis M.J."/>
            <person name="Wilming L.G."/>
            <person name="Aidinis V."/>
            <person name="Allen J.E."/>
            <person name="Ambesi-Impiombato A."/>
            <person name="Apweiler R."/>
            <person name="Aturaliya R.N."/>
            <person name="Bailey T.L."/>
            <person name="Bansal M."/>
            <person name="Baxter L."/>
            <person name="Beisel K.W."/>
            <person name="Bersano T."/>
            <person name="Bono H."/>
            <person name="Chalk A.M."/>
            <person name="Chiu K.P."/>
            <person name="Choudhary V."/>
            <person name="Christoffels A."/>
            <person name="Clutterbuck D.R."/>
            <person name="Crowe M.L."/>
            <person name="Dalla E."/>
            <person name="Dalrymple B.P."/>
            <person name="de Bono B."/>
            <person name="Della Gatta G."/>
            <person name="di Bernardo D."/>
            <person name="Down T."/>
            <person name="Engstrom P."/>
            <person name="Fagiolini M."/>
            <person name="Faulkner G."/>
            <person name="Fletcher C.F."/>
            <person name="Fukushima T."/>
            <person name="Furuno M."/>
            <person name="Futaki S."/>
            <person name="Gariboldi M."/>
            <person name="Georgii-Hemming P."/>
            <person name="Gingeras T.R."/>
            <person name="Gojobori T."/>
            <person name="Green R.E."/>
            <person name="Gustincich S."/>
            <person name="Harbers M."/>
            <person name="Hayashi Y."/>
            <person name="Hensch T.K."/>
            <person name="Hirokawa N."/>
            <person name="Hill D."/>
            <person name="Huminiecki L."/>
            <person name="Iacono M."/>
            <person name="Ikeo K."/>
            <person name="Iwama A."/>
            <person name="Ishikawa T."/>
            <person name="Jakt M."/>
            <person name="Kanapin A."/>
            <person name="Katoh M."/>
            <person name="Kawasawa Y."/>
            <person name="Kelso J."/>
            <person name="Kitamura H."/>
            <person name="Kitano H."/>
            <person name="Kollias G."/>
            <person name="Krishnan S.P."/>
            <person name="Kruger A."/>
            <person name="Kummerfeld S.K."/>
            <person name="Kurochkin I.V."/>
            <person name="Lareau L.F."/>
            <person name="Lazarevic D."/>
            <person name="Lipovich L."/>
            <person name="Liu J."/>
            <person name="Liuni S."/>
            <person name="McWilliam S."/>
            <person name="Madan Babu M."/>
            <person name="Madera M."/>
            <person name="Marchionni L."/>
            <person name="Matsuda H."/>
            <person name="Matsuzawa S."/>
            <person name="Miki H."/>
            <person name="Mignone F."/>
            <person name="Miyake S."/>
            <person name="Morris K."/>
            <person name="Mottagui-Tabar S."/>
            <person name="Mulder N."/>
            <person name="Nakano N."/>
            <person name="Nakauchi H."/>
            <person name="Ng P."/>
            <person name="Nilsson R."/>
            <person name="Nishiguchi S."/>
            <person name="Nishikawa S."/>
            <person name="Nori F."/>
            <person name="Ohara O."/>
            <person name="Okazaki Y."/>
            <person name="Orlando V."/>
            <person name="Pang K.C."/>
            <person name="Pavan W.J."/>
            <person name="Pavesi G."/>
            <person name="Pesole G."/>
            <person name="Petrovsky N."/>
            <person name="Piazza S."/>
            <person name="Reed J."/>
            <person name="Reid J.F."/>
            <person name="Ring B.Z."/>
            <person name="Ringwald M."/>
            <person name="Rost B."/>
            <person name="Ruan Y."/>
            <person name="Salzberg S.L."/>
            <person name="Sandelin A."/>
            <person name="Schneider C."/>
            <person name="Schoenbach C."/>
            <person name="Sekiguchi K."/>
            <person name="Semple C.A."/>
            <person name="Seno S."/>
            <person name="Sessa L."/>
            <person name="Sheng Y."/>
            <person name="Shibata Y."/>
            <person name="Shimada H."/>
            <person name="Shimada K."/>
            <person name="Silva D."/>
            <person name="Sinclair B."/>
            <person name="Sperling S."/>
            <person name="Stupka E."/>
            <person name="Sugiura K."/>
            <person name="Sultana R."/>
            <person name="Takenaka Y."/>
            <person name="Taki K."/>
            <person name="Tammoja K."/>
            <person name="Tan S.L."/>
            <person name="Tang S."/>
            <person name="Taylor M.S."/>
            <person name="Tegner J."/>
            <person name="Teichmann S.A."/>
            <person name="Ueda H.R."/>
            <person name="van Nimwegen E."/>
            <person name="Verardo R."/>
            <person name="Wei C.L."/>
            <person name="Yagi K."/>
            <person name="Yamanishi H."/>
            <person name="Zabarovsky E."/>
            <person name="Zhu S."/>
            <person name="Zimmer A."/>
            <person name="Hide W."/>
            <person name="Bult C."/>
            <person name="Grimmond S.M."/>
            <person name="Teasdale R.D."/>
            <person name="Liu E.T."/>
            <person name="Brusic V."/>
            <person name="Quackenbush J."/>
            <person name="Wahlestedt C."/>
            <person name="Mattick J.S."/>
            <person name="Hume D.A."/>
            <person name="Kai C."/>
            <person name="Sasaki D."/>
            <person name="Tomaru Y."/>
            <person name="Fukuda S."/>
            <person name="Kanamori-Katayama M."/>
            <person name="Suzuki M."/>
            <person name="Aoki J."/>
            <person name="Arakawa T."/>
            <person name="Iida J."/>
            <person name="Imamura K."/>
            <person name="Itoh M."/>
            <person name="Kato T."/>
            <person name="Kawaji H."/>
            <person name="Kawagashira N."/>
            <person name="Kawashima T."/>
            <person name="Kojima M."/>
            <person name="Kondo S."/>
            <person name="Konno H."/>
            <person name="Nakano K."/>
            <person name="Ninomiya N."/>
            <person name="Nishio T."/>
            <person name="Okada M."/>
            <person name="Plessy C."/>
            <person name="Shibata K."/>
            <person name="Shiraki T."/>
            <person name="Suzuki S."/>
            <person name="Tagami M."/>
            <person name="Waki K."/>
            <person name="Watahiki A."/>
            <person name="Okamura-Oho Y."/>
            <person name="Suzuki H."/>
            <person name="Kawai J."/>
            <person name="Hayashizaki Y."/>
        </authorList>
    </citation>
    <scope>NUCLEOTIDE SEQUENCE [LARGE SCALE MRNA] (ISOFORMS 1 AND 2)</scope>
    <source>
        <strain>C57BL/6J</strain>
        <tissue>Corpora quadrigemina</tissue>
        <tissue>Lung</tissue>
        <tissue>Medulla oblongata</tissue>
    </source>
</reference>
<reference key="3">
    <citation type="journal article" date="2004" name="Genome Res.">
        <title>The status, quality, and expansion of the NIH full-length cDNA project: the Mammalian Gene Collection (MGC).</title>
        <authorList>
            <consortium name="The MGC Project Team"/>
        </authorList>
    </citation>
    <scope>NUCLEOTIDE SEQUENCE [LARGE SCALE MRNA] (ISOFORM 1)</scope>
    <source>
        <tissue>Liver</tissue>
    </source>
</reference>